<protein>
    <recommendedName>
        <fullName>Transcriptional regulator WhiB2</fullName>
    </recommendedName>
</protein>
<sequence>MWGVVDDSAEEPWHELWGLFRPDGDVSWQHKALCAQTDPEAFFPEKGGSTRDAKRVCAKCEVREQCLKWAIDHDERFGIWGGMSERERRRYKREHRERA</sequence>
<gene>
    <name type="primary">whiB2</name>
    <name type="ordered locus">BL1008</name>
</gene>
<accession>Q8G5K1</accession>
<proteinExistence type="evidence at transcript level"/>
<dbReference type="EMBL" id="AE014295">
    <property type="protein sequence ID" value="AAN24816.1"/>
    <property type="molecule type" value="Genomic_DNA"/>
</dbReference>
<dbReference type="RefSeq" id="NP_696180.1">
    <property type="nucleotide sequence ID" value="NC_004307.2"/>
</dbReference>
<dbReference type="RefSeq" id="WP_007051901.1">
    <property type="nucleotide sequence ID" value="NC_004307.2"/>
</dbReference>
<dbReference type="SMR" id="Q8G5K1"/>
<dbReference type="STRING" id="206672.BL1008"/>
<dbReference type="EnsemblBacteria" id="AAN24816">
    <property type="protein sequence ID" value="AAN24816"/>
    <property type="gene ID" value="BL1008"/>
</dbReference>
<dbReference type="KEGG" id="blo:BL1008"/>
<dbReference type="PATRIC" id="fig|206672.9.peg.711"/>
<dbReference type="HOGENOM" id="CLU_106245_4_2_11"/>
<dbReference type="OrthoDB" id="5192305at2"/>
<dbReference type="PhylomeDB" id="Q8G5K1"/>
<dbReference type="Proteomes" id="UP000000439">
    <property type="component" value="Chromosome"/>
</dbReference>
<dbReference type="GO" id="GO:0005737">
    <property type="term" value="C:cytoplasm"/>
    <property type="evidence" value="ECO:0007669"/>
    <property type="project" value="UniProtKB-SubCell"/>
</dbReference>
<dbReference type="GO" id="GO:0051539">
    <property type="term" value="F:4 iron, 4 sulfur cluster binding"/>
    <property type="evidence" value="ECO:0007669"/>
    <property type="project" value="UniProtKB-UniRule"/>
</dbReference>
<dbReference type="GO" id="GO:0035731">
    <property type="term" value="F:dinitrosyl-iron complex binding"/>
    <property type="evidence" value="ECO:0007669"/>
    <property type="project" value="UniProtKB-UniRule"/>
</dbReference>
<dbReference type="GO" id="GO:0003677">
    <property type="term" value="F:DNA binding"/>
    <property type="evidence" value="ECO:0007669"/>
    <property type="project" value="UniProtKB-UniRule"/>
</dbReference>
<dbReference type="GO" id="GO:0046872">
    <property type="term" value="F:metal ion binding"/>
    <property type="evidence" value="ECO:0007669"/>
    <property type="project" value="UniProtKB-KW"/>
</dbReference>
<dbReference type="GO" id="GO:0047134">
    <property type="term" value="F:protein-disulfide reductase [NAD(P)H] activity"/>
    <property type="evidence" value="ECO:0007669"/>
    <property type="project" value="TreeGrafter"/>
</dbReference>
<dbReference type="GO" id="GO:0045454">
    <property type="term" value="P:cell redox homeostasis"/>
    <property type="evidence" value="ECO:0007669"/>
    <property type="project" value="TreeGrafter"/>
</dbReference>
<dbReference type="GO" id="GO:0045892">
    <property type="term" value="P:negative regulation of DNA-templated transcription"/>
    <property type="evidence" value="ECO:0007669"/>
    <property type="project" value="TreeGrafter"/>
</dbReference>
<dbReference type="HAMAP" id="MF_01479">
    <property type="entry name" value="WhiB"/>
    <property type="match status" value="1"/>
</dbReference>
<dbReference type="InterPro" id="IPR034768">
    <property type="entry name" value="4FE4S_WBL"/>
</dbReference>
<dbReference type="InterPro" id="IPR003482">
    <property type="entry name" value="Whib"/>
</dbReference>
<dbReference type="PANTHER" id="PTHR38839:SF4">
    <property type="entry name" value="TRANSCRIPTIONAL REGULATOR WHIB"/>
    <property type="match status" value="1"/>
</dbReference>
<dbReference type="PANTHER" id="PTHR38839">
    <property type="entry name" value="TRANSCRIPTIONAL REGULATOR WHID-RELATED"/>
    <property type="match status" value="1"/>
</dbReference>
<dbReference type="Pfam" id="PF02467">
    <property type="entry name" value="Whib"/>
    <property type="match status" value="1"/>
</dbReference>
<dbReference type="PROSITE" id="PS51674">
    <property type="entry name" value="4FE4S_WBL"/>
    <property type="match status" value="1"/>
</dbReference>
<reference key="1">
    <citation type="journal article" date="2002" name="Proc. Natl. Acad. Sci. U.S.A.">
        <title>The genome sequence of Bifidobacterium longum reflects its adaptation to the human gastrointestinal tract.</title>
        <authorList>
            <person name="Schell M.A."/>
            <person name="Karmirantzou M."/>
            <person name="Snel B."/>
            <person name="Vilanova D."/>
            <person name="Berger B."/>
            <person name="Pessi G."/>
            <person name="Zwahlen M.-C."/>
            <person name="Desiere F."/>
            <person name="Bork P."/>
            <person name="Delley M."/>
            <person name="Pridmore R.D."/>
            <person name="Arigoni F."/>
        </authorList>
    </citation>
    <scope>NUCLEOTIDE SEQUENCE [LARGE SCALE GENOMIC DNA]</scope>
    <source>
        <strain>NCC 2705</strain>
    </source>
</reference>
<reference key="2">
    <citation type="journal article" date="2012" name="Anaerobe">
        <title>Identification and characterization of WhiB-like family proteins of the Bifidobacterium genus.</title>
        <authorList>
            <person name="Averina O.V."/>
            <person name="Zakharevich N.V."/>
            <person name="Danilenko V.N."/>
        </authorList>
    </citation>
    <scope>INDUCTION</scope>
    <source>
        <strain>B 397M</strain>
    </source>
</reference>
<comment type="function">
    <text evidence="1">Acts as a transcriptional regulator. Probably redox-responsive. The apo- but not holo-form probably binds DNA (By similarity).</text>
</comment>
<comment type="cofactor">
    <cofactor evidence="1">
        <name>[4Fe-4S] cluster</name>
        <dbReference type="ChEBI" id="CHEBI:49883"/>
    </cofactor>
    <text evidence="1">Binds 1 [4Fe-4S] cluster per subunit. Following nitrosylation of the [4Fe-4S] cluster binds 1 [4Fe-8(NO)] cluster per subunit.</text>
</comment>
<comment type="subcellular location">
    <subcellularLocation>
        <location evidence="1">Cytoplasm</location>
    </subcellularLocation>
</comment>
<comment type="induction">
    <text evidence="2">Constitutively expressed during all growth phases. Repressed by osmotic stress, not responsive to a number of other stimuli.</text>
</comment>
<comment type="PTM">
    <text evidence="1">The Fe-S cluster can be nitrosylated by nitric oxide (NO).</text>
</comment>
<comment type="PTM">
    <text evidence="1">Upon Fe-S cluster removal intramolecular disulfide bonds are formed.</text>
</comment>
<comment type="similarity">
    <text evidence="3">Belongs to the WhiB family.</text>
</comment>
<organism>
    <name type="scientific">Bifidobacterium longum (strain NCC 2705)</name>
    <dbReference type="NCBI Taxonomy" id="206672"/>
    <lineage>
        <taxon>Bacteria</taxon>
        <taxon>Bacillati</taxon>
        <taxon>Actinomycetota</taxon>
        <taxon>Actinomycetes</taxon>
        <taxon>Bifidobacteriales</taxon>
        <taxon>Bifidobacteriaceae</taxon>
        <taxon>Bifidobacterium</taxon>
    </lineage>
</organism>
<keyword id="KW-0004">4Fe-4S</keyword>
<keyword id="KW-0963">Cytoplasm</keyword>
<keyword id="KW-1015">Disulfide bond</keyword>
<keyword id="KW-0238">DNA-binding</keyword>
<keyword id="KW-0408">Iron</keyword>
<keyword id="KW-0411">Iron-sulfur</keyword>
<keyword id="KW-0479">Metal-binding</keyword>
<keyword id="KW-1185">Reference proteome</keyword>
<keyword id="KW-0804">Transcription</keyword>
<keyword id="KW-0805">Transcription regulation</keyword>
<name>WHIB2_BIFLO</name>
<feature type="chain" id="PRO_0000420390" description="Transcriptional regulator WhiB2">
    <location>
        <begin position="1"/>
        <end position="99"/>
    </location>
</feature>
<feature type="domain" description="4Fe-4S Wbl-type">
    <location>
        <begin position="33"/>
        <end position="90"/>
    </location>
</feature>
<feature type="binding site" evidence="1">
    <location>
        <position position="34"/>
    </location>
    <ligand>
        <name>[4Fe-4S] cluster</name>
        <dbReference type="ChEBI" id="CHEBI:49883"/>
    </ligand>
</feature>
<feature type="binding site" evidence="1">
    <location>
        <position position="57"/>
    </location>
    <ligand>
        <name>[4Fe-4S] cluster</name>
        <dbReference type="ChEBI" id="CHEBI:49883"/>
    </ligand>
</feature>
<feature type="binding site" evidence="1">
    <location>
        <position position="60"/>
    </location>
    <ligand>
        <name>[4Fe-4S] cluster</name>
        <dbReference type="ChEBI" id="CHEBI:49883"/>
    </ligand>
</feature>
<feature type="binding site" evidence="1">
    <location>
        <position position="66"/>
    </location>
    <ligand>
        <name>[4Fe-4S] cluster</name>
        <dbReference type="ChEBI" id="CHEBI:49883"/>
    </ligand>
</feature>
<evidence type="ECO:0000250" key="1"/>
<evidence type="ECO:0000269" key="2">
    <source>
    </source>
</evidence>
<evidence type="ECO:0000305" key="3"/>